<reference key="1">
    <citation type="journal article" date="1995" name="Science">
        <title>Whole-genome random sequencing and assembly of Haemophilus influenzae Rd.</title>
        <authorList>
            <person name="Fleischmann R.D."/>
            <person name="Adams M.D."/>
            <person name="White O."/>
            <person name="Clayton R.A."/>
            <person name="Kirkness E.F."/>
            <person name="Kerlavage A.R."/>
            <person name="Bult C.J."/>
            <person name="Tomb J.-F."/>
            <person name="Dougherty B.A."/>
            <person name="Merrick J.M."/>
            <person name="McKenney K."/>
            <person name="Sutton G.G."/>
            <person name="FitzHugh W."/>
            <person name="Fields C.A."/>
            <person name="Gocayne J.D."/>
            <person name="Scott J.D."/>
            <person name="Shirley R."/>
            <person name="Liu L.-I."/>
            <person name="Glodek A."/>
            <person name="Kelley J.M."/>
            <person name="Weidman J.F."/>
            <person name="Phillips C.A."/>
            <person name="Spriggs T."/>
            <person name="Hedblom E."/>
            <person name="Cotton M.D."/>
            <person name="Utterback T.R."/>
            <person name="Hanna M.C."/>
            <person name="Nguyen D.T."/>
            <person name="Saudek D.M."/>
            <person name="Brandon R.C."/>
            <person name="Fine L.D."/>
            <person name="Fritchman J.L."/>
            <person name="Fuhrmann J.L."/>
            <person name="Geoghagen N.S.M."/>
            <person name="Gnehm C.L."/>
            <person name="McDonald L.A."/>
            <person name="Small K.V."/>
            <person name="Fraser C.M."/>
            <person name="Smith H.O."/>
            <person name="Venter J.C."/>
        </authorList>
    </citation>
    <scope>NUCLEOTIDE SEQUENCE [LARGE SCALE GENOMIC DNA]</scope>
    <source>
        <strain>ATCC 51907 / DSM 11121 / KW20 / Rd</strain>
    </source>
</reference>
<reference key="2">
    <citation type="submission" date="1998-05" db="EMBL/GenBank/DDBJ databases">
        <authorList>
            <person name="White O."/>
            <person name="Clayton R.A."/>
            <person name="Kerlavage A.R."/>
            <person name="Fleischmann R.D."/>
            <person name="Peterson J."/>
            <person name="Hickey E."/>
            <person name="Dodson R."/>
            <person name="Gwinn M."/>
        </authorList>
    </citation>
    <scope>SEQUENCE REVISION</scope>
</reference>
<dbReference type="EMBL" id="L42023">
    <property type="protein sequence ID" value="AAC21892.1"/>
    <property type="molecule type" value="Genomic_DNA"/>
</dbReference>
<dbReference type="RefSeq" id="NP_438395.1">
    <property type="nucleotide sequence ID" value="NC_000907.1"/>
</dbReference>
<dbReference type="SMR" id="P44579"/>
<dbReference type="STRING" id="71421.HI_0223"/>
<dbReference type="EnsemblBacteria" id="AAC21892">
    <property type="protein sequence ID" value="AAC21892"/>
    <property type="gene ID" value="HI_0223"/>
</dbReference>
<dbReference type="KEGG" id="hin:HI_0223"/>
<dbReference type="PATRIC" id="fig|71421.8.peg.236"/>
<dbReference type="eggNOG" id="COG2962">
    <property type="taxonomic scope" value="Bacteria"/>
</dbReference>
<dbReference type="HOGENOM" id="CLU_054508_2_0_6"/>
<dbReference type="OrthoDB" id="3250831at2"/>
<dbReference type="PhylomeDB" id="P44579"/>
<dbReference type="BioCyc" id="HINF71421:G1GJ1-240-MONOMER"/>
<dbReference type="Proteomes" id="UP000000579">
    <property type="component" value="Chromosome"/>
</dbReference>
<dbReference type="GO" id="GO:0005886">
    <property type="term" value="C:plasma membrane"/>
    <property type="evidence" value="ECO:0000318"/>
    <property type="project" value="GO_Central"/>
</dbReference>
<dbReference type="InterPro" id="IPR000620">
    <property type="entry name" value="EamA_dom"/>
</dbReference>
<dbReference type="InterPro" id="IPR004626">
    <property type="entry name" value="RarD"/>
</dbReference>
<dbReference type="NCBIfam" id="TIGR00688">
    <property type="entry name" value="rarD"/>
    <property type="match status" value="1"/>
</dbReference>
<dbReference type="Pfam" id="PF00892">
    <property type="entry name" value="EamA"/>
    <property type="match status" value="1"/>
</dbReference>
<dbReference type="SUPFAM" id="SSF103481">
    <property type="entry name" value="Multidrug resistance efflux transporter EmrE"/>
    <property type="match status" value="2"/>
</dbReference>
<accession>P44579</accession>
<gene>
    <name type="ordered locus">HI_0223</name>
</gene>
<feature type="chain" id="PRO_0000108157" description="Uncharacterized transporter HI_0223">
    <location>
        <begin position="1"/>
        <end position="300"/>
    </location>
</feature>
<feature type="transmembrane region" description="Helical" evidence="1">
    <location>
        <begin position="13"/>
        <end position="35"/>
    </location>
</feature>
<feature type="transmembrane region" description="Helical" evidence="1">
    <location>
        <begin position="45"/>
        <end position="67"/>
    </location>
</feature>
<feature type="transmembrane region" description="Helical" evidence="1">
    <location>
        <begin position="80"/>
        <end position="102"/>
    </location>
</feature>
<feature type="transmembrane region" description="Helical" evidence="1">
    <location>
        <begin position="106"/>
        <end position="128"/>
    </location>
</feature>
<feature type="transmembrane region" description="Helical" evidence="1">
    <location>
        <begin position="180"/>
        <end position="202"/>
    </location>
</feature>
<feature type="transmembrane region" description="Helical" evidence="1">
    <location>
        <begin position="217"/>
        <end position="236"/>
    </location>
</feature>
<feature type="transmembrane region" description="Helical" evidence="1">
    <location>
        <begin position="243"/>
        <end position="265"/>
    </location>
</feature>
<feature type="transmembrane region" description="Helical" evidence="1">
    <location>
        <begin position="275"/>
        <end position="294"/>
    </location>
</feature>
<sequence>MKFKMKVVTQGILLCIFSQCLFGILYLFSIWLQPLSGTDVFAWRMLTMIFGLLLILFPTIGCRSLLSLITTTLGKSWTRWVLFLLGTLDAGSQFWLFMWAPLNGEGINIAMGYFLFPLIMAVLGWAWLKERLSFIQKIALLLAAAGVAHELWHTQSFSWTSLWVCTVYPFYYLSRKWMKIPALQGITLDIILISIPCFIYILSQSDTLSLVTQEYRYWLLLPALGIVSAISLSANLKSSQQIPVSIFAVLSYIEPILLFLIAVFVLDNQITTSDYFTYVPIWLSLIVIGIEGLLNKKKVR</sequence>
<evidence type="ECO:0000255" key="1"/>
<evidence type="ECO:0000305" key="2"/>
<protein>
    <recommendedName>
        <fullName>Uncharacterized transporter HI_0223</fullName>
    </recommendedName>
</protein>
<organism>
    <name type="scientific">Haemophilus influenzae (strain ATCC 51907 / DSM 11121 / KW20 / Rd)</name>
    <dbReference type="NCBI Taxonomy" id="71421"/>
    <lineage>
        <taxon>Bacteria</taxon>
        <taxon>Pseudomonadati</taxon>
        <taxon>Pseudomonadota</taxon>
        <taxon>Gammaproteobacteria</taxon>
        <taxon>Pasteurellales</taxon>
        <taxon>Pasteurellaceae</taxon>
        <taxon>Haemophilus</taxon>
    </lineage>
</organism>
<name>Y223_HAEIN</name>
<proteinExistence type="inferred from homology"/>
<keyword id="KW-1003">Cell membrane</keyword>
<keyword id="KW-0472">Membrane</keyword>
<keyword id="KW-1185">Reference proteome</keyword>
<keyword id="KW-0812">Transmembrane</keyword>
<keyword id="KW-1133">Transmembrane helix</keyword>
<keyword id="KW-0813">Transport</keyword>
<comment type="subcellular location">
    <subcellularLocation>
        <location evidence="2">Cell membrane</location>
        <topology evidence="2">Multi-pass membrane protein</topology>
    </subcellularLocation>
</comment>
<comment type="similarity">
    <text evidence="2">Belongs to the EamA transporter family.</text>
</comment>